<name>NUOK_BURCH</name>
<organism>
    <name type="scientific">Burkholderia cenocepacia (strain HI2424)</name>
    <dbReference type="NCBI Taxonomy" id="331272"/>
    <lineage>
        <taxon>Bacteria</taxon>
        <taxon>Pseudomonadati</taxon>
        <taxon>Pseudomonadota</taxon>
        <taxon>Betaproteobacteria</taxon>
        <taxon>Burkholderiales</taxon>
        <taxon>Burkholderiaceae</taxon>
        <taxon>Burkholderia</taxon>
        <taxon>Burkholderia cepacia complex</taxon>
    </lineage>
</organism>
<dbReference type="EC" id="7.1.1.-" evidence="1"/>
<dbReference type="EMBL" id="CP000458">
    <property type="protein sequence ID" value="ABK08990.1"/>
    <property type="molecule type" value="Genomic_DNA"/>
</dbReference>
<dbReference type="RefSeq" id="WP_006478272.1">
    <property type="nucleotide sequence ID" value="NC_008542.1"/>
</dbReference>
<dbReference type="SMR" id="A0K913"/>
<dbReference type="GeneID" id="93191319"/>
<dbReference type="KEGG" id="bch:Bcen2424_2239"/>
<dbReference type="HOGENOM" id="CLU_144724_2_0_4"/>
<dbReference type="GO" id="GO:0030964">
    <property type="term" value="C:NADH dehydrogenase complex"/>
    <property type="evidence" value="ECO:0007669"/>
    <property type="project" value="TreeGrafter"/>
</dbReference>
<dbReference type="GO" id="GO:0005886">
    <property type="term" value="C:plasma membrane"/>
    <property type="evidence" value="ECO:0007669"/>
    <property type="project" value="UniProtKB-SubCell"/>
</dbReference>
<dbReference type="GO" id="GO:0050136">
    <property type="term" value="F:NADH:ubiquinone reductase (non-electrogenic) activity"/>
    <property type="evidence" value="ECO:0007669"/>
    <property type="project" value="UniProtKB-UniRule"/>
</dbReference>
<dbReference type="GO" id="GO:0048038">
    <property type="term" value="F:quinone binding"/>
    <property type="evidence" value="ECO:0007669"/>
    <property type="project" value="UniProtKB-KW"/>
</dbReference>
<dbReference type="GO" id="GO:0042773">
    <property type="term" value="P:ATP synthesis coupled electron transport"/>
    <property type="evidence" value="ECO:0007669"/>
    <property type="project" value="InterPro"/>
</dbReference>
<dbReference type="FunFam" id="1.10.287.3510:FF:000001">
    <property type="entry name" value="NADH-quinone oxidoreductase subunit K"/>
    <property type="match status" value="1"/>
</dbReference>
<dbReference type="Gene3D" id="1.10.287.3510">
    <property type="match status" value="1"/>
</dbReference>
<dbReference type="HAMAP" id="MF_01456">
    <property type="entry name" value="NDH1_NuoK"/>
    <property type="match status" value="1"/>
</dbReference>
<dbReference type="InterPro" id="IPR001133">
    <property type="entry name" value="NADH_UbQ_OxRdtase_chain4L/K"/>
</dbReference>
<dbReference type="InterPro" id="IPR039428">
    <property type="entry name" value="NUOK/Mnh_C1-like"/>
</dbReference>
<dbReference type="NCBIfam" id="NF004320">
    <property type="entry name" value="PRK05715.1-2"/>
    <property type="match status" value="1"/>
</dbReference>
<dbReference type="NCBIfam" id="NF004321">
    <property type="entry name" value="PRK05715.1-3"/>
    <property type="match status" value="1"/>
</dbReference>
<dbReference type="NCBIfam" id="NF004323">
    <property type="entry name" value="PRK05715.1-5"/>
    <property type="match status" value="1"/>
</dbReference>
<dbReference type="PANTHER" id="PTHR11434:SF21">
    <property type="entry name" value="NADH DEHYDROGENASE SUBUNIT 4L-RELATED"/>
    <property type="match status" value="1"/>
</dbReference>
<dbReference type="PANTHER" id="PTHR11434">
    <property type="entry name" value="NADH-UBIQUINONE OXIDOREDUCTASE SUBUNIT ND4L"/>
    <property type="match status" value="1"/>
</dbReference>
<dbReference type="Pfam" id="PF00420">
    <property type="entry name" value="Oxidored_q2"/>
    <property type="match status" value="1"/>
</dbReference>
<evidence type="ECO:0000255" key="1">
    <source>
        <dbReference type="HAMAP-Rule" id="MF_01456"/>
    </source>
</evidence>
<feature type="chain" id="PRO_0000389985" description="NADH-quinone oxidoreductase subunit K">
    <location>
        <begin position="1"/>
        <end position="101"/>
    </location>
</feature>
<feature type="transmembrane region" description="Helical" evidence="1">
    <location>
        <begin position="4"/>
        <end position="24"/>
    </location>
</feature>
<feature type="transmembrane region" description="Helical" evidence="1">
    <location>
        <begin position="30"/>
        <end position="50"/>
    </location>
</feature>
<feature type="transmembrane region" description="Helical" evidence="1">
    <location>
        <begin position="61"/>
        <end position="81"/>
    </location>
</feature>
<reference key="1">
    <citation type="submission" date="2006-08" db="EMBL/GenBank/DDBJ databases">
        <title>Complete sequence of chromosome 1 of Burkholderia cenocepacia HI2424.</title>
        <authorList>
            <person name="Copeland A."/>
            <person name="Lucas S."/>
            <person name="Lapidus A."/>
            <person name="Barry K."/>
            <person name="Detter J.C."/>
            <person name="Glavina del Rio T."/>
            <person name="Hammon N."/>
            <person name="Israni S."/>
            <person name="Pitluck S."/>
            <person name="Chain P."/>
            <person name="Malfatti S."/>
            <person name="Shin M."/>
            <person name="Vergez L."/>
            <person name="Schmutz J."/>
            <person name="Larimer F."/>
            <person name="Land M."/>
            <person name="Hauser L."/>
            <person name="Kyrpides N."/>
            <person name="Kim E."/>
            <person name="LiPuma J.J."/>
            <person name="Gonzalez C.F."/>
            <person name="Konstantinidis K."/>
            <person name="Tiedje J.M."/>
            <person name="Richardson P."/>
        </authorList>
    </citation>
    <scope>NUCLEOTIDE SEQUENCE [LARGE SCALE GENOMIC DNA]</scope>
    <source>
        <strain>HI2424</strain>
    </source>
</reference>
<keyword id="KW-0997">Cell inner membrane</keyword>
<keyword id="KW-1003">Cell membrane</keyword>
<keyword id="KW-0472">Membrane</keyword>
<keyword id="KW-0520">NAD</keyword>
<keyword id="KW-0874">Quinone</keyword>
<keyword id="KW-1278">Translocase</keyword>
<keyword id="KW-0812">Transmembrane</keyword>
<keyword id="KW-1133">Transmembrane helix</keyword>
<keyword id="KW-0813">Transport</keyword>
<keyword id="KW-0830">Ubiquinone</keyword>
<protein>
    <recommendedName>
        <fullName evidence="1">NADH-quinone oxidoreductase subunit K</fullName>
        <ecNumber evidence="1">7.1.1.-</ecNumber>
    </recommendedName>
    <alternativeName>
        <fullName evidence="1">NADH dehydrogenase I subunit K</fullName>
    </alternativeName>
    <alternativeName>
        <fullName evidence="1">NDH-1 subunit K</fullName>
    </alternativeName>
</protein>
<proteinExistence type="inferred from homology"/>
<accession>A0K913</accession>
<comment type="function">
    <text evidence="1">NDH-1 shuttles electrons from NADH, via FMN and iron-sulfur (Fe-S) centers, to quinones in the respiratory chain. The immediate electron acceptor for the enzyme in this species is believed to be ubiquinone. Couples the redox reaction to proton translocation (for every two electrons transferred, four hydrogen ions are translocated across the cytoplasmic membrane), and thus conserves the redox energy in a proton gradient.</text>
</comment>
<comment type="catalytic activity">
    <reaction evidence="1">
        <text>a quinone + NADH + 5 H(+)(in) = a quinol + NAD(+) + 4 H(+)(out)</text>
        <dbReference type="Rhea" id="RHEA:57888"/>
        <dbReference type="ChEBI" id="CHEBI:15378"/>
        <dbReference type="ChEBI" id="CHEBI:24646"/>
        <dbReference type="ChEBI" id="CHEBI:57540"/>
        <dbReference type="ChEBI" id="CHEBI:57945"/>
        <dbReference type="ChEBI" id="CHEBI:132124"/>
    </reaction>
</comment>
<comment type="subunit">
    <text evidence="1">NDH-1 is composed of 14 different subunits. Subunits NuoA, H, J, K, L, M, N constitute the membrane sector of the complex.</text>
</comment>
<comment type="subcellular location">
    <subcellularLocation>
        <location evidence="1">Cell inner membrane</location>
        <topology evidence="1">Multi-pass membrane protein</topology>
    </subcellularLocation>
</comment>
<comment type="similarity">
    <text evidence="1">Belongs to the complex I subunit 4L family.</text>
</comment>
<gene>
    <name evidence="1" type="primary">nuoK</name>
    <name type="ordered locus">Bcen2424_2239</name>
</gene>
<sequence>MLTLAHYLVLGAILFAIAIVGIFLNRRNVIIILMSIELMLLAVNTNFVAFSHYLGDVHGQIFVFFVLTVAAAEAAIGLAILVTLFRKLDTINVEDLDQLKG</sequence>